<organism>
    <name type="scientific">Salmonella paratyphi A (strain AKU_12601)</name>
    <dbReference type="NCBI Taxonomy" id="554290"/>
    <lineage>
        <taxon>Bacteria</taxon>
        <taxon>Pseudomonadati</taxon>
        <taxon>Pseudomonadota</taxon>
        <taxon>Gammaproteobacteria</taxon>
        <taxon>Enterobacterales</taxon>
        <taxon>Enterobacteriaceae</taxon>
        <taxon>Salmonella</taxon>
    </lineage>
</organism>
<sequence length="327" mass="36476">MFDAAPIKKVSVVIPVYNEQESLPELIRRTTAACESLGKAWEILLIDDGSSDSSAELMVKASQEADSHIISILLNRNYGQHAAIMAGFSHVSGDLIITLDADLQNPPEEIPRLVAKADEGFDVVGTVRQNRQDSLFRKSASKIINLLIQRTTGKAMGDYGCMLRAYRRPIIDTMLRCHERSTFIPILANIFARRATEIPVHHAEREFGDSKYSFMRLINLMYDLVTCLTTTPLRLLSLLGSVIAIGGFSLSVLLIVLRLALGPQWAAEGVFMLFAVLFTFIGAQFIGMGLLGEYIGRIYNDVRARPRYFVQQVIYPESTSFTEESHQ</sequence>
<comment type="function">
    <text evidence="1">Catalyzes the transfer of 4-deoxy-4-formamido-L-arabinose from UDP to undecaprenyl phosphate. The modified arabinose is attached to lipid A and is required for resistance to polymyxin and cationic antimicrobial peptides.</text>
</comment>
<comment type="catalytic activity">
    <reaction evidence="1">
        <text>UDP-4-deoxy-4-formamido-beta-L-arabinose + di-trans,octa-cis-undecaprenyl phosphate = 4-deoxy-4-formamido-alpha-L-arabinopyranosyl di-trans,octa-cis-undecaprenyl phosphate + UDP</text>
        <dbReference type="Rhea" id="RHEA:27722"/>
        <dbReference type="ChEBI" id="CHEBI:58223"/>
        <dbReference type="ChEBI" id="CHEBI:58709"/>
        <dbReference type="ChEBI" id="CHEBI:58909"/>
        <dbReference type="ChEBI" id="CHEBI:60392"/>
        <dbReference type="EC" id="2.4.2.53"/>
    </reaction>
</comment>
<comment type="pathway">
    <text evidence="1">Glycolipid biosynthesis; 4-amino-4-deoxy-alpha-L-arabinose undecaprenyl phosphate biosynthesis; 4-amino-4-deoxy-alpha-L-arabinose undecaprenyl phosphate from UDP-4-deoxy-4-formamido-beta-L-arabinose and undecaprenyl phosphate: step 1/2.</text>
</comment>
<comment type="pathway">
    <text evidence="1">Bacterial outer membrane biogenesis; lipopolysaccharide biosynthesis.</text>
</comment>
<comment type="subcellular location">
    <subcellularLocation>
        <location evidence="1">Cell inner membrane</location>
        <topology evidence="1">Multi-pass membrane protein</topology>
    </subcellularLocation>
</comment>
<comment type="similarity">
    <text evidence="1">Belongs to the glycosyltransferase 2 family.</text>
</comment>
<name>ARNC_SALPK</name>
<proteinExistence type="inferred from homology"/>
<reference key="1">
    <citation type="journal article" date="2009" name="BMC Genomics">
        <title>Pseudogene accumulation in the evolutionary histories of Salmonella enterica serovars Paratyphi A and Typhi.</title>
        <authorList>
            <person name="Holt K.E."/>
            <person name="Thomson N.R."/>
            <person name="Wain J."/>
            <person name="Langridge G.C."/>
            <person name="Hasan R."/>
            <person name="Bhutta Z.A."/>
            <person name="Quail M.A."/>
            <person name="Norbertczak H."/>
            <person name="Walker D."/>
            <person name="Simmonds M."/>
            <person name="White B."/>
            <person name="Bason N."/>
            <person name="Mungall K."/>
            <person name="Dougan G."/>
            <person name="Parkhill J."/>
        </authorList>
    </citation>
    <scope>NUCLEOTIDE SEQUENCE [LARGE SCALE GENOMIC DNA]</scope>
    <source>
        <strain>AKU_12601</strain>
    </source>
</reference>
<evidence type="ECO:0000255" key="1">
    <source>
        <dbReference type="HAMAP-Rule" id="MF_01164"/>
    </source>
</evidence>
<protein>
    <recommendedName>
        <fullName evidence="1">Undecaprenyl-phosphate 4-deoxy-4-formamido-L-arabinose transferase</fullName>
        <ecNumber evidence="1">2.4.2.53</ecNumber>
    </recommendedName>
    <alternativeName>
        <fullName evidence="1">Undecaprenyl-phosphate Ara4FN transferase</fullName>
        <shortName evidence="1">Ara4FN transferase</shortName>
    </alternativeName>
</protein>
<gene>
    <name evidence="1" type="primary">arnC</name>
    <name type="ordered locus">SSPA0529</name>
</gene>
<accession>B5BCP7</accession>
<dbReference type="EC" id="2.4.2.53" evidence="1"/>
<dbReference type="EMBL" id="FM200053">
    <property type="protein sequence ID" value="CAR58658.1"/>
    <property type="molecule type" value="Genomic_DNA"/>
</dbReference>
<dbReference type="RefSeq" id="WP_000458888.1">
    <property type="nucleotide sequence ID" value="NC_011147.1"/>
</dbReference>
<dbReference type="SMR" id="B5BCP7"/>
<dbReference type="CAZy" id="GT2">
    <property type="family name" value="Glycosyltransferase Family 2"/>
</dbReference>
<dbReference type="KEGG" id="sek:SSPA0529"/>
<dbReference type="HOGENOM" id="CLU_033536_0_0_6"/>
<dbReference type="UniPathway" id="UPA00030"/>
<dbReference type="UniPathway" id="UPA00036">
    <property type="reaction ID" value="UER00495"/>
</dbReference>
<dbReference type="Proteomes" id="UP000001869">
    <property type="component" value="Chromosome"/>
</dbReference>
<dbReference type="GO" id="GO:0005886">
    <property type="term" value="C:plasma membrane"/>
    <property type="evidence" value="ECO:0007669"/>
    <property type="project" value="UniProtKB-SubCell"/>
</dbReference>
<dbReference type="GO" id="GO:0016780">
    <property type="term" value="F:phosphotransferase activity, for other substituted phosphate groups"/>
    <property type="evidence" value="ECO:0007669"/>
    <property type="project" value="UniProtKB-UniRule"/>
</dbReference>
<dbReference type="GO" id="GO:0099621">
    <property type="term" value="F:undecaprenyl-phosphate 4-deoxy-4-formamido-L-arabinose transferase activity"/>
    <property type="evidence" value="ECO:0007669"/>
    <property type="project" value="UniProtKB-EC"/>
</dbReference>
<dbReference type="GO" id="GO:0036108">
    <property type="term" value="P:4-amino-4-deoxy-alpha-L-arabinopyranosyl undecaprenyl phosphate biosynthetic process"/>
    <property type="evidence" value="ECO:0007669"/>
    <property type="project" value="UniProtKB-UniRule"/>
</dbReference>
<dbReference type="GO" id="GO:0009245">
    <property type="term" value="P:lipid A biosynthetic process"/>
    <property type="evidence" value="ECO:0007669"/>
    <property type="project" value="UniProtKB-UniRule"/>
</dbReference>
<dbReference type="GO" id="GO:0009103">
    <property type="term" value="P:lipopolysaccharide biosynthetic process"/>
    <property type="evidence" value="ECO:0007669"/>
    <property type="project" value="UniProtKB-UniRule"/>
</dbReference>
<dbReference type="GO" id="GO:0046677">
    <property type="term" value="P:response to antibiotic"/>
    <property type="evidence" value="ECO:0007669"/>
    <property type="project" value="UniProtKB-KW"/>
</dbReference>
<dbReference type="CDD" id="cd04187">
    <property type="entry name" value="DPM1_like_bac"/>
    <property type="match status" value="1"/>
</dbReference>
<dbReference type="FunFam" id="3.90.550.10:FF:000019">
    <property type="entry name" value="Undecaprenyl-phosphate 4-deoxy-4-formamido-L-arabinose transferase"/>
    <property type="match status" value="1"/>
</dbReference>
<dbReference type="Gene3D" id="3.90.550.10">
    <property type="entry name" value="Spore Coat Polysaccharide Biosynthesis Protein SpsA, Chain A"/>
    <property type="match status" value="1"/>
</dbReference>
<dbReference type="HAMAP" id="MF_01164">
    <property type="entry name" value="ArnC_transfer"/>
    <property type="match status" value="1"/>
</dbReference>
<dbReference type="InterPro" id="IPR022857">
    <property type="entry name" value="ArnC_tfrase"/>
</dbReference>
<dbReference type="InterPro" id="IPR001173">
    <property type="entry name" value="Glyco_trans_2-like"/>
</dbReference>
<dbReference type="InterPro" id="IPR050256">
    <property type="entry name" value="Glycosyltransferase_2"/>
</dbReference>
<dbReference type="InterPro" id="IPR029044">
    <property type="entry name" value="Nucleotide-diphossugar_trans"/>
</dbReference>
<dbReference type="NCBIfam" id="NF007986">
    <property type="entry name" value="PRK10714.1"/>
    <property type="match status" value="1"/>
</dbReference>
<dbReference type="PANTHER" id="PTHR48090:SF3">
    <property type="entry name" value="UNDECAPRENYL-PHOSPHATE 4-DEOXY-4-FORMAMIDO-L-ARABINOSE TRANSFERASE"/>
    <property type="match status" value="1"/>
</dbReference>
<dbReference type="PANTHER" id="PTHR48090">
    <property type="entry name" value="UNDECAPRENYL-PHOSPHATE 4-DEOXY-4-FORMAMIDO-L-ARABINOSE TRANSFERASE-RELATED"/>
    <property type="match status" value="1"/>
</dbReference>
<dbReference type="Pfam" id="PF00535">
    <property type="entry name" value="Glycos_transf_2"/>
    <property type="match status" value="1"/>
</dbReference>
<dbReference type="SUPFAM" id="SSF53448">
    <property type="entry name" value="Nucleotide-diphospho-sugar transferases"/>
    <property type="match status" value="1"/>
</dbReference>
<feature type="chain" id="PRO_1000137923" description="Undecaprenyl-phosphate 4-deoxy-4-formamido-L-arabinose transferase">
    <location>
        <begin position="1"/>
        <end position="327"/>
    </location>
</feature>
<feature type="topological domain" description="Cytoplasmic" evidence="1">
    <location>
        <begin position="1"/>
        <end position="235"/>
    </location>
</feature>
<feature type="transmembrane region" description="Helical" evidence="1">
    <location>
        <begin position="236"/>
        <end position="256"/>
    </location>
</feature>
<feature type="topological domain" description="Periplasmic" evidence="1">
    <location>
        <begin position="257"/>
        <end position="269"/>
    </location>
</feature>
<feature type="transmembrane region" description="Helical" evidence="1">
    <location>
        <begin position="270"/>
        <end position="290"/>
    </location>
</feature>
<feature type="topological domain" description="Cytoplasmic" evidence="1">
    <location>
        <begin position="291"/>
        <end position="327"/>
    </location>
</feature>
<keyword id="KW-0046">Antibiotic resistance</keyword>
<keyword id="KW-0997">Cell inner membrane</keyword>
<keyword id="KW-1003">Cell membrane</keyword>
<keyword id="KW-0328">Glycosyltransferase</keyword>
<keyword id="KW-0441">Lipid A biosynthesis</keyword>
<keyword id="KW-0444">Lipid biosynthesis</keyword>
<keyword id="KW-0443">Lipid metabolism</keyword>
<keyword id="KW-0448">Lipopolysaccharide biosynthesis</keyword>
<keyword id="KW-0472">Membrane</keyword>
<keyword id="KW-0808">Transferase</keyword>
<keyword id="KW-0812">Transmembrane</keyword>
<keyword id="KW-1133">Transmembrane helix</keyword>